<gene>
    <name evidence="1" type="primary">truA</name>
    <name type="ordered locus">LSL_1404</name>
</gene>
<sequence length="256" mass="29455">MTQRFKVTLAYDGTNFAGFQAQPNQRTVQFVLEKAINKMSKKDEYITVYGSGRTDSGVHALGQVVHFDFPHPISAKGMLRGLNSMLPLDCEVVDCKIVPNDFHSRYTTHGKRYLYRVSRGEFVNPFKRLYTGHYKYPLDIEKIKEAMPDVEGTHDYSSFVASGSQAKSHVRTIYEAKVYEDKVNDEIVFEFYGNGFLYNQVRIMVATLLEIGNGKRPVHDFLRLYEVKDRSQARQTAPASGLYLKEVYYDEEDEKL</sequence>
<evidence type="ECO:0000255" key="1">
    <source>
        <dbReference type="HAMAP-Rule" id="MF_00171"/>
    </source>
</evidence>
<dbReference type="EC" id="5.4.99.12" evidence="1"/>
<dbReference type="EMBL" id="CP000233">
    <property type="protein sequence ID" value="ABE00208.1"/>
    <property type="molecule type" value="Genomic_DNA"/>
</dbReference>
<dbReference type="RefSeq" id="WP_004563878.1">
    <property type="nucleotide sequence ID" value="NC_007929.1"/>
</dbReference>
<dbReference type="RefSeq" id="YP_536291.1">
    <property type="nucleotide sequence ID" value="NC_007929.1"/>
</dbReference>
<dbReference type="SMR" id="Q1WSC1"/>
<dbReference type="STRING" id="362948.LSL_1404"/>
<dbReference type="GeneID" id="89466139"/>
<dbReference type="KEGG" id="lsl:LSL_1404"/>
<dbReference type="PATRIC" id="fig|362948.14.peg.1487"/>
<dbReference type="HOGENOM" id="CLU_014673_0_1_9"/>
<dbReference type="OrthoDB" id="9811823at2"/>
<dbReference type="Proteomes" id="UP000006559">
    <property type="component" value="Chromosome"/>
</dbReference>
<dbReference type="GO" id="GO:0003723">
    <property type="term" value="F:RNA binding"/>
    <property type="evidence" value="ECO:0007669"/>
    <property type="project" value="InterPro"/>
</dbReference>
<dbReference type="GO" id="GO:0160147">
    <property type="term" value="F:tRNA pseudouridine(38-40) synthase activity"/>
    <property type="evidence" value="ECO:0007669"/>
    <property type="project" value="UniProtKB-EC"/>
</dbReference>
<dbReference type="GO" id="GO:0031119">
    <property type="term" value="P:tRNA pseudouridine synthesis"/>
    <property type="evidence" value="ECO:0007669"/>
    <property type="project" value="UniProtKB-UniRule"/>
</dbReference>
<dbReference type="CDD" id="cd02570">
    <property type="entry name" value="PseudoU_synth_EcTruA"/>
    <property type="match status" value="1"/>
</dbReference>
<dbReference type="FunFam" id="3.30.70.580:FF:000001">
    <property type="entry name" value="tRNA pseudouridine synthase A"/>
    <property type="match status" value="1"/>
</dbReference>
<dbReference type="Gene3D" id="3.30.70.660">
    <property type="entry name" value="Pseudouridine synthase I, catalytic domain, C-terminal subdomain"/>
    <property type="match status" value="1"/>
</dbReference>
<dbReference type="Gene3D" id="3.30.70.580">
    <property type="entry name" value="Pseudouridine synthase I, catalytic domain, N-terminal subdomain"/>
    <property type="match status" value="1"/>
</dbReference>
<dbReference type="HAMAP" id="MF_00171">
    <property type="entry name" value="TruA"/>
    <property type="match status" value="1"/>
</dbReference>
<dbReference type="InterPro" id="IPR020103">
    <property type="entry name" value="PsdUridine_synth_cat_dom_sf"/>
</dbReference>
<dbReference type="InterPro" id="IPR001406">
    <property type="entry name" value="PsdUridine_synth_TruA"/>
</dbReference>
<dbReference type="InterPro" id="IPR020097">
    <property type="entry name" value="PsdUridine_synth_TruA_a/b_dom"/>
</dbReference>
<dbReference type="InterPro" id="IPR020095">
    <property type="entry name" value="PsdUridine_synth_TruA_C"/>
</dbReference>
<dbReference type="InterPro" id="IPR020094">
    <property type="entry name" value="TruA/RsuA/RluB/E/F_N"/>
</dbReference>
<dbReference type="NCBIfam" id="TIGR00071">
    <property type="entry name" value="hisT_truA"/>
    <property type="match status" value="1"/>
</dbReference>
<dbReference type="PANTHER" id="PTHR11142">
    <property type="entry name" value="PSEUDOURIDYLATE SYNTHASE"/>
    <property type="match status" value="1"/>
</dbReference>
<dbReference type="PANTHER" id="PTHR11142:SF0">
    <property type="entry name" value="TRNA PSEUDOURIDINE SYNTHASE-LIKE 1"/>
    <property type="match status" value="1"/>
</dbReference>
<dbReference type="Pfam" id="PF01416">
    <property type="entry name" value="PseudoU_synth_1"/>
    <property type="match status" value="2"/>
</dbReference>
<dbReference type="PIRSF" id="PIRSF001430">
    <property type="entry name" value="tRNA_psdUrid_synth"/>
    <property type="match status" value="1"/>
</dbReference>
<dbReference type="SUPFAM" id="SSF55120">
    <property type="entry name" value="Pseudouridine synthase"/>
    <property type="match status" value="1"/>
</dbReference>
<feature type="chain" id="PRO_1000017102" description="tRNA pseudouridine synthase A">
    <location>
        <begin position="1"/>
        <end position="256"/>
    </location>
</feature>
<feature type="active site" description="Nucleophile" evidence="1">
    <location>
        <position position="55"/>
    </location>
</feature>
<feature type="binding site" evidence="1">
    <location>
        <position position="113"/>
    </location>
    <ligand>
        <name>substrate</name>
    </ligand>
</feature>
<organism>
    <name type="scientific">Ligilactobacillus salivarius (strain UCC118)</name>
    <name type="common">Lactobacillus salivarius</name>
    <dbReference type="NCBI Taxonomy" id="362948"/>
    <lineage>
        <taxon>Bacteria</taxon>
        <taxon>Bacillati</taxon>
        <taxon>Bacillota</taxon>
        <taxon>Bacilli</taxon>
        <taxon>Lactobacillales</taxon>
        <taxon>Lactobacillaceae</taxon>
        <taxon>Ligilactobacillus</taxon>
    </lineage>
</organism>
<reference key="1">
    <citation type="journal article" date="2006" name="Proc. Natl. Acad. Sci. U.S.A.">
        <title>Multireplicon genome architecture of Lactobacillus salivarius.</title>
        <authorList>
            <person name="Claesson M.J."/>
            <person name="Li Y."/>
            <person name="Leahy S."/>
            <person name="Canchaya C."/>
            <person name="van Pijkeren J.P."/>
            <person name="Cerdeno-Tarraga A.M."/>
            <person name="Parkhill J."/>
            <person name="Flynn S."/>
            <person name="O'Sullivan G.C."/>
            <person name="Collins J.K."/>
            <person name="Higgins D."/>
            <person name="Shanahan F."/>
            <person name="Fitzgerald G.F."/>
            <person name="van Sinderen D."/>
            <person name="O'Toole P.W."/>
        </authorList>
    </citation>
    <scope>NUCLEOTIDE SEQUENCE [LARGE SCALE GENOMIC DNA]</scope>
    <source>
        <strain>UCC118</strain>
    </source>
</reference>
<keyword id="KW-0413">Isomerase</keyword>
<keyword id="KW-1185">Reference proteome</keyword>
<keyword id="KW-0819">tRNA processing</keyword>
<accession>Q1WSC1</accession>
<protein>
    <recommendedName>
        <fullName evidence="1">tRNA pseudouridine synthase A</fullName>
        <ecNumber evidence="1">5.4.99.12</ecNumber>
    </recommendedName>
    <alternativeName>
        <fullName evidence="1">tRNA pseudouridine(38-40) synthase</fullName>
    </alternativeName>
    <alternativeName>
        <fullName evidence="1">tRNA pseudouridylate synthase I</fullName>
    </alternativeName>
    <alternativeName>
        <fullName evidence="1">tRNA-uridine isomerase I</fullName>
    </alternativeName>
</protein>
<proteinExistence type="inferred from homology"/>
<comment type="function">
    <text evidence="1">Formation of pseudouridine at positions 38, 39 and 40 in the anticodon stem and loop of transfer RNAs.</text>
</comment>
<comment type="catalytic activity">
    <reaction evidence="1">
        <text>uridine(38/39/40) in tRNA = pseudouridine(38/39/40) in tRNA</text>
        <dbReference type="Rhea" id="RHEA:22376"/>
        <dbReference type="Rhea" id="RHEA-COMP:10085"/>
        <dbReference type="Rhea" id="RHEA-COMP:10087"/>
        <dbReference type="ChEBI" id="CHEBI:65314"/>
        <dbReference type="ChEBI" id="CHEBI:65315"/>
        <dbReference type="EC" id="5.4.99.12"/>
    </reaction>
</comment>
<comment type="subunit">
    <text evidence="1">Homodimer.</text>
</comment>
<comment type="similarity">
    <text evidence="1">Belongs to the tRNA pseudouridine synthase TruA family.</text>
</comment>
<name>TRUA_LIGS1</name>